<accession>Q8TE82</accession>
<accession>Q4W5G5</accession>
<dbReference type="EMBL" id="AK074402">
    <property type="protein sequence ID" value="BAB85071.1"/>
    <property type="molecule type" value="mRNA"/>
</dbReference>
<dbReference type="EMBL" id="AC104650">
    <property type="protein sequence ID" value="AAY40932.1"/>
    <property type="molecule type" value="Genomic_DNA"/>
</dbReference>
<dbReference type="CCDS" id="CCDS3399.1"/>
<dbReference type="RefSeq" id="NP_001305409.1">
    <property type="nucleotide sequence ID" value="NM_001318480.1"/>
</dbReference>
<dbReference type="RefSeq" id="NP_061859.3">
    <property type="nucleotide sequence ID" value="NM_018986.4"/>
</dbReference>
<dbReference type="RefSeq" id="XP_011511790.1">
    <property type="nucleotide sequence ID" value="XM_011513488.1"/>
</dbReference>
<dbReference type="RefSeq" id="XP_016863789.1">
    <property type="nucleotide sequence ID" value="XM_017008300.3"/>
</dbReference>
<dbReference type="RefSeq" id="XP_047271747.1">
    <property type="nucleotide sequence ID" value="XM_047415791.1"/>
</dbReference>
<dbReference type="BioGRID" id="119952">
    <property type="interactions" value="6"/>
</dbReference>
<dbReference type="FunCoup" id="Q8TE82">
    <property type="interactions" value="26"/>
</dbReference>
<dbReference type="IntAct" id="Q8TE82">
    <property type="interactions" value="3"/>
</dbReference>
<dbReference type="MINT" id="Q8TE82"/>
<dbReference type="STRING" id="9606.ENSP00000245105"/>
<dbReference type="GlyGen" id="Q8TE82">
    <property type="glycosylation" value="1 site, 1 O-linked glycan (1 site)"/>
</dbReference>
<dbReference type="iPTMnet" id="Q8TE82"/>
<dbReference type="PhosphoSitePlus" id="Q8TE82"/>
<dbReference type="SwissPalm" id="Q8TE82"/>
<dbReference type="BioMuta" id="SH3TC1"/>
<dbReference type="DMDM" id="313104192"/>
<dbReference type="jPOST" id="Q8TE82"/>
<dbReference type="MassIVE" id="Q8TE82"/>
<dbReference type="PaxDb" id="9606-ENSP00000245105"/>
<dbReference type="PeptideAtlas" id="Q8TE82"/>
<dbReference type="ProteomicsDB" id="74419"/>
<dbReference type="Pumba" id="Q8TE82"/>
<dbReference type="TopDownProteomics" id="Q8TE82"/>
<dbReference type="Antibodypedia" id="52212">
    <property type="antibodies" value="99 antibodies from 19 providers"/>
</dbReference>
<dbReference type="DNASU" id="54436"/>
<dbReference type="Ensembl" id="ENST00000245105.8">
    <property type="protein sequence ID" value="ENSP00000245105.3"/>
    <property type="gene ID" value="ENSG00000125089.18"/>
</dbReference>
<dbReference type="Ensembl" id="ENST00000457650.7">
    <property type="protein sequence ID" value="ENSP00000390311.3"/>
    <property type="gene ID" value="ENSG00000125089.18"/>
</dbReference>
<dbReference type="GeneID" id="54436"/>
<dbReference type="KEGG" id="hsa:54436"/>
<dbReference type="MANE-Select" id="ENST00000245105.8">
    <property type="protein sequence ID" value="ENSP00000245105.3"/>
    <property type="RefSeq nucleotide sequence ID" value="NM_018986.5"/>
    <property type="RefSeq protein sequence ID" value="NP_061859.4"/>
</dbReference>
<dbReference type="UCSC" id="uc003gkv.5">
    <property type="organism name" value="human"/>
</dbReference>
<dbReference type="AGR" id="HGNC:26009"/>
<dbReference type="CTD" id="54436"/>
<dbReference type="DisGeNET" id="54436"/>
<dbReference type="GeneCards" id="SH3TC1"/>
<dbReference type="HGNC" id="HGNC:26009">
    <property type="gene designation" value="SH3TC1"/>
</dbReference>
<dbReference type="HPA" id="ENSG00000125089">
    <property type="expression patterns" value="Tissue enriched (lymphoid)"/>
</dbReference>
<dbReference type="neXtProt" id="NX_Q8TE82"/>
<dbReference type="OpenTargets" id="ENSG00000125089"/>
<dbReference type="PharmGKB" id="PA128394666"/>
<dbReference type="VEuPathDB" id="HostDB:ENSG00000125089"/>
<dbReference type="eggNOG" id="ENOG502QUY4">
    <property type="taxonomic scope" value="Eukaryota"/>
</dbReference>
<dbReference type="GeneTree" id="ENSGT00530000063812"/>
<dbReference type="HOGENOM" id="CLU_004832_0_0_1"/>
<dbReference type="InParanoid" id="Q8TE82"/>
<dbReference type="OMA" id="FTNEQQG"/>
<dbReference type="OrthoDB" id="9927874at2759"/>
<dbReference type="PAN-GO" id="Q8TE82">
    <property type="GO annotations" value="0 GO annotations based on evolutionary models"/>
</dbReference>
<dbReference type="PhylomeDB" id="Q8TE82"/>
<dbReference type="TreeFam" id="TF333167"/>
<dbReference type="PathwayCommons" id="Q8TE82"/>
<dbReference type="SignaLink" id="Q8TE82"/>
<dbReference type="BioGRID-ORCS" id="54436">
    <property type="hits" value="14 hits in 1149 CRISPR screens"/>
</dbReference>
<dbReference type="ChiTaRS" id="SH3TC1">
    <property type="organism name" value="human"/>
</dbReference>
<dbReference type="GenomeRNAi" id="54436"/>
<dbReference type="Pharos" id="Q8TE82">
    <property type="development level" value="Tdark"/>
</dbReference>
<dbReference type="PRO" id="PR:Q8TE82"/>
<dbReference type="Proteomes" id="UP000005640">
    <property type="component" value="Chromosome 4"/>
</dbReference>
<dbReference type="RNAct" id="Q8TE82">
    <property type="molecule type" value="protein"/>
</dbReference>
<dbReference type="Bgee" id="ENSG00000125089">
    <property type="expression patterns" value="Expressed in thymus and 117 other cell types or tissues"/>
</dbReference>
<dbReference type="ExpressionAtlas" id="Q8TE82">
    <property type="expression patterns" value="baseline and differential"/>
</dbReference>
<dbReference type="CDD" id="cd11885">
    <property type="entry name" value="SH3_SH3TC"/>
    <property type="match status" value="1"/>
</dbReference>
<dbReference type="Gene3D" id="2.30.30.40">
    <property type="entry name" value="SH3 Domains"/>
    <property type="match status" value="1"/>
</dbReference>
<dbReference type="Gene3D" id="1.25.40.10">
    <property type="entry name" value="Tetratricopeptide repeat domain"/>
    <property type="match status" value="4"/>
</dbReference>
<dbReference type="InterPro" id="IPR036028">
    <property type="entry name" value="SH3-like_dom_sf"/>
</dbReference>
<dbReference type="InterPro" id="IPR001452">
    <property type="entry name" value="SH3_domain"/>
</dbReference>
<dbReference type="InterPro" id="IPR042772">
    <property type="entry name" value="SH3TC1/SH3TC2"/>
</dbReference>
<dbReference type="InterPro" id="IPR011990">
    <property type="entry name" value="TPR-like_helical_dom_sf"/>
</dbReference>
<dbReference type="InterPro" id="IPR019734">
    <property type="entry name" value="TPR_rpt"/>
</dbReference>
<dbReference type="PANTHER" id="PTHR22647:SF3">
    <property type="entry name" value="SH3 DOMAIN AND TETRATRICOPEPTIDE REPEAT-CONTAINING PROTEIN 1"/>
    <property type="match status" value="1"/>
</dbReference>
<dbReference type="PANTHER" id="PTHR22647">
    <property type="entry name" value="SH3 DOMAIN AND TETRATRICOPEPTIDE REPEATS CONTAINING PROTEIN"/>
    <property type="match status" value="1"/>
</dbReference>
<dbReference type="Pfam" id="PF00018">
    <property type="entry name" value="SH3_1"/>
    <property type="match status" value="1"/>
</dbReference>
<dbReference type="SMART" id="SM00326">
    <property type="entry name" value="SH3"/>
    <property type="match status" value="1"/>
</dbReference>
<dbReference type="SMART" id="SM00028">
    <property type="entry name" value="TPR"/>
    <property type="match status" value="6"/>
</dbReference>
<dbReference type="SUPFAM" id="SSF50044">
    <property type="entry name" value="SH3-domain"/>
    <property type="match status" value="1"/>
</dbReference>
<dbReference type="SUPFAM" id="SSF48452">
    <property type="entry name" value="TPR-like"/>
    <property type="match status" value="4"/>
</dbReference>
<dbReference type="PROSITE" id="PS50002">
    <property type="entry name" value="SH3"/>
    <property type="match status" value="1"/>
</dbReference>
<keyword id="KW-0007">Acetylation</keyword>
<keyword id="KW-0597">Phosphoprotein</keyword>
<keyword id="KW-1267">Proteomics identification</keyword>
<keyword id="KW-1185">Reference proteome</keyword>
<keyword id="KW-0677">Repeat</keyword>
<keyword id="KW-0728">SH3 domain</keyword>
<keyword id="KW-0802">TPR repeat</keyword>
<reference key="1">
    <citation type="journal article" date="2004" name="Nat. Genet.">
        <title>Complete sequencing and characterization of 21,243 full-length human cDNAs.</title>
        <authorList>
            <person name="Ota T."/>
            <person name="Suzuki Y."/>
            <person name="Nishikawa T."/>
            <person name="Otsuki T."/>
            <person name="Sugiyama T."/>
            <person name="Irie R."/>
            <person name="Wakamatsu A."/>
            <person name="Hayashi K."/>
            <person name="Sato H."/>
            <person name="Nagai K."/>
            <person name="Kimura K."/>
            <person name="Makita H."/>
            <person name="Sekine M."/>
            <person name="Obayashi M."/>
            <person name="Nishi T."/>
            <person name="Shibahara T."/>
            <person name="Tanaka T."/>
            <person name="Ishii S."/>
            <person name="Yamamoto J."/>
            <person name="Saito K."/>
            <person name="Kawai Y."/>
            <person name="Isono Y."/>
            <person name="Nakamura Y."/>
            <person name="Nagahari K."/>
            <person name="Murakami K."/>
            <person name="Yasuda T."/>
            <person name="Iwayanagi T."/>
            <person name="Wagatsuma M."/>
            <person name="Shiratori A."/>
            <person name="Sudo H."/>
            <person name="Hosoiri T."/>
            <person name="Kaku Y."/>
            <person name="Kodaira H."/>
            <person name="Kondo H."/>
            <person name="Sugawara M."/>
            <person name="Takahashi M."/>
            <person name="Kanda K."/>
            <person name="Yokoi T."/>
            <person name="Furuya T."/>
            <person name="Kikkawa E."/>
            <person name="Omura Y."/>
            <person name="Abe K."/>
            <person name="Kamihara K."/>
            <person name="Katsuta N."/>
            <person name="Sato K."/>
            <person name="Tanikawa M."/>
            <person name="Yamazaki M."/>
            <person name="Ninomiya K."/>
            <person name="Ishibashi T."/>
            <person name="Yamashita H."/>
            <person name="Murakawa K."/>
            <person name="Fujimori K."/>
            <person name="Tanai H."/>
            <person name="Kimata M."/>
            <person name="Watanabe M."/>
            <person name="Hiraoka S."/>
            <person name="Chiba Y."/>
            <person name="Ishida S."/>
            <person name="Ono Y."/>
            <person name="Takiguchi S."/>
            <person name="Watanabe S."/>
            <person name="Yosida M."/>
            <person name="Hotuta T."/>
            <person name="Kusano J."/>
            <person name="Kanehori K."/>
            <person name="Takahashi-Fujii A."/>
            <person name="Hara H."/>
            <person name="Tanase T.-O."/>
            <person name="Nomura Y."/>
            <person name="Togiya S."/>
            <person name="Komai F."/>
            <person name="Hara R."/>
            <person name="Takeuchi K."/>
            <person name="Arita M."/>
            <person name="Imose N."/>
            <person name="Musashino K."/>
            <person name="Yuuki H."/>
            <person name="Oshima A."/>
            <person name="Sasaki N."/>
            <person name="Aotsuka S."/>
            <person name="Yoshikawa Y."/>
            <person name="Matsunawa H."/>
            <person name="Ichihara T."/>
            <person name="Shiohata N."/>
            <person name="Sano S."/>
            <person name="Moriya S."/>
            <person name="Momiyama H."/>
            <person name="Satoh N."/>
            <person name="Takami S."/>
            <person name="Terashima Y."/>
            <person name="Suzuki O."/>
            <person name="Nakagawa S."/>
            <person name="Senoh A."/>
            <person name="Mizoguchi H."/>
            <person name="Goto Y."/>
            <person name="Shimizu F."/>
            <person name="Wakebe H."/>
            <person name="Hishigaki H."/>
            <person name="Watanabe T."/>
            <person name="Sugiyama A."/>
            <person name="Takemoto M."/>
            <person name="Kawakami B."/>
            <person name="Yamazaki M."/>
            <person name="Watanabe K."/>
            <person name="Kumagai A."/>
            <person name="Itakura S."/>
            <person name="Fukuzumi Y."/>
            <person name="Fujimori Y."/>
            <person name="Komiyama M."/>
            <person name="Tashiro H."/>
            <person name="Tanigami A."/>
            <person name="Fujiwara T."/>
            <person name="Ono T."/>
            <person name="Yamada K."/>
            <person name="Fujii Y."/>
            <person name="Ozaki K."/>
            <person name="Hirao M."/>
            <person name="Ohmori Y."/>
            <person name="Kawabata A."/>
            <person name="Hikiji T."/>
            <person name="Kobatake N."/>
            <person name="Inagaki H."/>
            <person name="Ikema Y."/>
            <person name="Okamoto S."/>
            <person name="Okitani R."/>
            <person name="Kawakami T."/>
            <person name="Noguchi S."/>
            <person name="Itoh T."/>
            <person name="Shigeta K."/>
            <person name="Senba T."/>
            <person name="Matsumura K."/>
            <person name="Nakajima Y."/>
            <person name="Mizuno T."/>
            <person name="Morinaga M."/>
            <person name="Sasaki M."/>
            <person name="Togashi T."/>
            <person name="Oyama M."/>
            <person name="Hata H."/>
            <person name="Watanabe M."/>
            <person name="Komatsu T."/>
            <person name="Mizushima-Sugano J."/>
            <person name="Satoh T."/>
            <person name="Shirai Y."/>
            <person name="Takahashi Y."/>
            <person name="Nakagawa K."/>
            <person name="Okumura K."/>
            <person name="Nagase T."/>
            <person name="Nomura N."/>
            <person name="Kikuchi H."/>
            <person name="Masuho Y."/>
            <person name="Yamashita R."/>
            <person name="Nakai K."/>
            <person name="Yada T."/>
            <person name="Nakamura Y."/>
            <person name="Ohara O."/>
            <person name="Isogai T."/>
            <person name="Sugano S."/>
        </authorList>
    </citation>
    <scope>NUCLEOTIDE SEQUENCE [LARGE SCALE MRNA]</scope>
    <scope>VARIANT PRO-437</scope>
</reference>
<reference key="2">
    <citation type="journal article" date="2005" name="Nature">
        <title>Generation and annotation of the DNA sequences of human chromosomes 2 and 4.</title>
        <authorList>
            <person name="Hillier L.W."/>
            <person name="Graves T.A."/>
            <person name="Fulton R.S."/>
            <person name="Fulton L.A."/>
            <person name="Pepin K.H."/>
            <person name="Minx P."/>
            <person name="Wagner-McPherson C."/>
            <person name="Layman D."/>
            <person name="Wylie K."/>
            <person name="Sekhon M."/>
            <person name="Becker M.C."/>
            <person name="Fewell G.A."/>
            <person name="Delehaunty K.D."/>
            <person name="Miner T.L."/>
            <person name="Nash W.E."/>
            <person name="Kremitzki C."/>
            <person name="Oddy L."/>
            <person name="Du H."/>
            <person name="Sun H."/>
            <person name="Bradshaw-Cordum H."/>
            <person name="Ali J."/>
            <person name="Carter J."/>
            <person name="Cordes M."/>
            <person name="Harris A."/>
            <person name="Isak A."/>
            <person name="van Brunt A."/>
            <person name="Nguyen C."/>
            <person name="Du F."/>
            <person name="Courtney L."/>
            <person name="Kalicki J."/>
            <person name="Ozersky P."/>
            <person name="Abbott S."/>
            <person name="Armstrong J."/>
            <person name="Belter E.A."/>
            <person name="Caruso L."/>
            <person name="Cedroni M."/>
            <person name="Cotton M."/>
            <person name="Davidson T."/>
            <person name="Desai A."/>
            <person name="Elliott G."/>
            <person name="Erb T."/>
            <person name="Fronick C."/>
            <person name="Gaige T."/>
            <person name="Haakenson W."/>
            <person name="Haglund K."/>
            <person name="Holmes A."/>
            <person name="Harkins R."/>
            <person name="Kim K."/>
            <person name="Kruchowski S.S."/>
            <person name="Strong C.M."/>
            <person name="Grewal N."/>
            <person name="Goyea E."/>
            <person name="Hou S."/>
            <person name="Levy A."/>
            <person name="Martinka S."/>
            <person name="Mead K."/>
            <person name="McLellan M.D."/>
            <person name="Meyer R."/>
            <person name="Randall-Maher J."/>
            <person name="Tomlinson C."/>
            <person name="Dauphin-Kohlberg S."/>
            <person name="Kozlowicz-Reilly A."/>
            <person name="Shah N."/>
            <person name="Swearengen-Shahid S."/>
            <person name="Snider J."/>
            <person name="Strong J.T."/>
            <person name="Thompson J."/>
            <person name="Yoakum M."/>
            <person name="Leonard S."/>
            <person name="Pearman C."/>
            <person name="Trani L."/>
            <person name="Radionenko M."/>
            <person name="Waligorski J.E."/>
            <person name="Wang C."/>
            <person name="Rock S.M."/>
            <person name="Tin-Wollam A.-M."/>
            <person name="Maupin R."/>
            <person name="Latreille P."/>
            <person name="Wendl M.C."/>
            <person name="Yang S.-P."/>
            <person name="Pohl C."/>
            <person name="Wallis J.W."/>
            <person name="Spieth J."/>
            <person name="Bieri T.A."/>
            <person name="Berkowicz N."/>
            <person name="Nelson J.O."/>
            <person name="Osborne J."/>
            <person name="Ding L."/>
            <person name="Meyer R."/>
            <person name="Sabo A."/>
            <person name="Shotland Y."/>
            <person name="Sinha P."/>
            <person name="Wohldmann P.E."/>
            <person name="Cook L.L."/>
            <person name="Hickenbotham M.T."/>
            <person name="Eldred J."/>
            <person name="Williams D."/>
            <person name="Jones T.A."/>
            <person name="She X."/>
            <person name="Ciccarelli F.D."/>
            <person name="Izaurralde E."/>
            <person name="Taylor J."/>
            <person name="Schmutz J."/>
            <person name="Myers R.M."/>
            <person name="Cox D.R."/>
            <person name="Huang X."/>
            <person name="McPherson J.D."/>
            <person name="Mardis E.R."/>
            <person name="Clifton S.W."/>
            <person name="Warren W.C."/>
            <person name="Chinwalla A.T."/>
            <person name="Eddy S.R."/>
            <person name="Marra M.A."/>
            <person name="Ovcharenko I."/>
            <person name="Furey T.S."/>
            <person name="Miller W."/>
            <person name="Eichler E.E."/>
            <person name="Bork P."/>
            <person name="Suyama M."/>
            <person name="Torrents D."/>
            <person name="Waterston R.H."/>
            <person name="Wilson R.K."/>
        </authorList>
    </citation>
    <scope>NUCLEOTIDE SEQUENCE [LARGE SCALE GENOMIC DNA]</scope>
</reference>
<reference key="3">
    <citation type="journal article" date="2009" name="Sci. Signal.">
        <title>Quantitative phosphoproteomic analysis of T cell receptor signaling reveals system-wide modulation of protein-protein interactions.</title>
        <authorList>
            <person name="Mayya V."/>
            <person name="Lundgren D.H."/>
            <person name="Hwang S.-I."/>
            <person name="Rezaul K."/>
            <person name="Wu L."/>
            <person name="Eng J.K."/>
            <person name="Rodionov V."/>
            <person name="Han D.K."/>
        </authorList>
    </citation>
    <scope>PHOSPHORYLATION [LARGE SCALE ANALYSIS] AT TYR-1248</scope>
    <scope>IDENTIFICATION BY MASS SPECTROMETRY [LARGE SCALE ANALYSIS]</scope>
    <source>
        <tissue>Leukemic T-cell</tissue>
    </source>
</reference>
<reference key="4">
    <citation type="journal article" date="2012" name="Proc. Natl. Acad. Sci. U.S.A.">
        <title>N-terminal acetylome analyses and functional insights of the N-terminal acetyltransferase NatB.</title>
        <authorList>
            <person name="Van Damme P."/>
            <person name="Lasa M."/>
            <person name="Polevoda B."/>
            <person name="Gazquez C."/>
            <person name="Elosegui-Artola A."/>
            <person name="Kim D.S."/>
            <person name="De Juan-Pardo E."/>
            <person name="Demeyer K."/>
            <person name="Hole K."/>
            <person name="Larrea E."/>
            <person name="Timmerman E."/>
            <person name="Prieto J."/>
            <person name="Arnesen T."/>
            <person name="Sherman F."/>
            <person name="Gevaert K."/>
            <person name="Aldabe R."/>
        </authorList>
    </citation>
    <scope>ACETYLATION [LARGE SCALE ANALYSIS] AT MET-1</scope>
    <scope>IDENTIFICATION BY MASS SPECTROMETRY [LARGE SCALE ANALYSIS]</scope>
</reference>
<reference key="5">
    <citation type="journal article" date="2006" name="Science">
        <title>The consensus coding sequences of human breast and colorectal cancers.</title>
        <authorList>
            <person name="Sjoeblom T."/>
            <person name="Jones S."/>
            <person name="Wood L.D."/>
            <person name="Parsons D.W."/>
            <person name="Lin J."/>
            <person name="Barber T.D."/>
            <person name="Mandelker D."/>
            <person name="Leary R.J."/>
            <person name="Ptak J."/>
            <person name="Silliman N."/>
            <person name="Szabo S."/>
            <person name="Buckhaults P."/>
            <person name="Farrell C."/>
            <person name="Meeh P."/>
            <person name="Markowitz S.D."/>
            <person name="Willis J."/>
            <person name="Dawson D."/>
            <person name="Willson J.K.V."/>
            <person name="Gazdar A.F."/>
            <person name="Hartigan J."/>
            <person name="Wu L."/>
            <person name="Liu C."/>
            <person name="Parmigiani G."/>
            <person name="Park B.H."/>
            <person name="Bachman K.E."/>
            <person name="Papadopoulos N."/>
            <person name="Vogelstein B."/>
            <person name="Kinzler K.W."/>
            <person name="Velculescu V.E."/>
        </authorList>
    </citation>
    <scope>VARIANTS [LARGE SCALE ANALYSIS] HIS-719 AND THR-1130</scope>
</reference>
<gene>
    <name type="primary">SH3TC1</name>
</gene>
<evidence type="ECO:0000255" key="1">
    <source>
        <dbReference type="PROSITE-ProRule" id="PRU00192"/>
    </source>
</evidence>
<evidence type="ECO:0000256" key="2">
    <source>
        <dbReference type="SAM" id="MobiDB-lite"/>
    </source>
</evidence>
<evidence type="ECO:0000269" key="3">
    <source>
    </source>
</evidence>
<evidence type="ECO:0000269" key="4">
    <source>
    </source>
</evidence>
<evidence type="ECO:0000305" key="5"/>
<evidence type="ECO:0007744" key="6">
    <source>
    </source>
</evidence>
<evidence type="ECO:0007744" key="7">
    <source>
    </source>
</evidence>
<feature type="chain" id="PRO_0000106355" description="SH3 domain and tetratricopeptide repeat-containing protein 1">
    <location>
        <begin position="1"/>
        <end position="1336"/>
    </location>
</feature>
<feature type="domain" description="SH3" evidence="1">
    <location>
        <begin position="305"/>
        <end position="368"/>
    </location>
</feature>
<feature type="repeat" description="TPR 1">
    <location>
        <begin position="560"/>
        <end position="593"/>
    </location>
</feature>
<feature type="repeat" description="TPR 2">
    <location>
        <begin position="601"/>
        <end position="634"/>
    </location>
</feature>
<feature type="repeat" description="TPR 3">
    <location>
        <begin position="665"/>
        <end position="698"/>
    </location>
</feature>
<feature type="repeat" description="TPR 4">
    <location>
        <begin position="786"/>
        <end position="819"/>
    </location>
</feature>
<feature type="repeat" description="TPR 5">
    <location>
        <begin position="863"/>
        <end position="896"/>
    </location>
</feature>
<feature type="repeat" description="TPR 6">
    <location>
        <begin position="946"/>
        <end position="979"/>
    </location>
</feature>
<feature type="repeat" description="TPR 7">
    <location>
        <begin position="1027"/>
        <end position="1063"/>
    </location>
</feature>
<feature type="repeat" description="TPR 8">
    <location>
        <begin position="1192"/>
        <end position="1225"/>
    </location>
</feature>
<feature type="repeat" description="TPR 9">
    <location>
        <begin position="1277"/>
        <end position="1311"/>
    </location>
</feature>
<feature type="region of interest" description="Disordered" evidence="2">
    <location>
        <begin position="1"/>
        <end position="76"/>
    </location>
</feature>
<feature type="region of interest" description="Disordered" evidence="2">
    <location>
        <begin position="225"/>
        <end position="266"/>
    </location>
</feature>
<feature type="compositionally biased region" description="Gly residues" evidence="2">
    <location>
        <begin position="18"/>
        <end position="27"/>
    </location>
</feature>
<feature type="compositionally biased region" description="Basic and acidic residues" evidence="2">
    <location>
        <begin position="46"/>
        <end position="61"/>
    </location>
</feature>
<feature type="compositionally biased region" description="Low complexity" evidence="2">
    <location>
        <begin position="62"/>
        <end position="74"/>
    </location>
</feature>
<feature type="compositionally biased region" description="Low complexity" evidence="2">
    <location>
        <begin position="247"/>
        <end position="266"/>
    </location>
</feature>
<feature type="modified residue" description="N-acetylmethionine" evidence="7">
    <location>
        <position position="1"/>
    </location>
</feature>
<feature type="modified residue" description="Phosphotyrosine" evidence="6">
    <location>
        <position position="1248"/>
    </location>
</feature>
<feature type="sequence variant" id="VAR_034127" description="In dbSNP:rs1281138.">
    <original>D</original>
    <variation>N</variation>
    <location>
        <position position="291"/>
    </location>
</feature>
<feature type="sequence variant" id="VAR_034128" description="In dbSNP:rs1281145." evidence="3">
    <original>L</original>
    <variation>P</variation>
    <location>
        <position position="437"/>
    </location>
</feature>
<feature type="sequence variant" id="VAR_035866" description="In a colorectal cancer sample; somatic mutation; dbSNP:rs201295499." evidence="4">
    <original>R</original>
    <variation>H</variation>
    <location>
        <position position="719"/>
    </location>
</feature>
<feature type="sequence variant" id="VAR_021934" description="In dbSNP:rs1281149.">
    <original>R</original>
    <variation>C</variation>
    <location>
        <position position="785"/>
    </location>
</feature>
<feature type="sequence variant" id="VAR_035867" description="In a colorectal cancer sample; somatic mutation; dbSNP:rs1348201855." evidence="4">
    <original>A</original>
    <variation>T</variation>
    <location>
        <position position="1130"/>
    </location>
</feature>
<feature type="sequence conflict" description="In Ref. 1; BAB85071." evidence="5" ref="1">
    <original>L</original>
    <variation>P</variation>
    <location>
        <position position="1016"/>
    </location>
</feature>
<proteinExistence type="evidence at protein level"/>
<sequence length="1336" mass="146961">MENLPAVTTEEPTPMGRGPVGPSGGGSTRDQVRTVVMRPSVSWEKAGPEEAKAPVRGDEAPPARVAGPAAGTPPCQMGVYPTDLTLQLLAVRRKSRLRDPGLQQTLRGQLRLLENDSREMARVLGELSARLLSIHSDQDRIVVTFKTFEEIWKFSTYHALGFTHHCLANLLMDQAFWLLLPSEEEETAIQVHVDENALRLTHESLLIQEGPFFVLCPDHHVRVMTGPRDAGNGPQALRQASGAPQGEAAPETDSSPPSPSVSSEEVAVAAAPEPLIPFHQWALRIPQDPIDDAMGGPVMPGNPLMAVGLASALADFQGSGPEEMTFRGGDLIEILGAQVPSLPWCVGRHAASGRVGFVRSSLISMQGPVSELESAIFLNEEEKSFFSEGCFSEEDARQLLRRMSGTDVCSVYSLDSVEEAETEQPQEKEIPPPCLSLEPQETLQKVKNVLEQCKTCPGCPQEPASWGLCAASSDVSLQDPEEPSFCLEAEDDWEDPEALSSLLLFLNAPGYKASFRGLYDVALPWLSSVFRSFSDEEELTGRLAQARGAAKKAGLLMALARLCFLLGRLCSRRLKLSQARVYFEEALGALEGSFGDLFLVVAVYANLASIYRKQKNREKCAQVVPKAMALLLGTPDHICSTEAEGELLQLALRRAVGGQSLQAEARACFLLARHHVHLKQPEEALPFLERLLLLHRDSGAPEAAWLSDCYLLLADIYSRKCLPHLVLSCVKVASLRTRGSLAGSLRSVNLVLQNAPQPHSLPAQTSHYLRQALASLTPGTGQALRGPLYTSLAQLYSHHGCHGPAITFMTQAVEASAIAGVRAIVDHLVALAWLHVLHGQSPVALDILQSVRDAVVASEDQEGVIANMVAVALKRTGRTRQAAESYYRALRVARDLGQQRNQAVGLANFGALCLHAGASRLAQHYLLEAVRLFSRLPLGECGRDFTHVLLQLGHLCTRQGPAQQGKGYYEWALLVAVEMGHVESQLRAVQRLCHFYSAVMPSEAQCVIYHELQLSLACKVADKVLEGQLLETISQLYLSLGTERAYKSALDYTKRSLGIFIDLQKKEKEAHAWLQAGKIYYILRQSELVDLYIQVAQNVALYTGDPNLGLELFEAAGDIFFDGAWEREKAVSFYRDRALPLAVTTGNRKAELRLCNKLVALLATLEEPQEGLEFAHMALALSITLGDRLNERVAYHRLAALQHRLGHGELAEHFYLKALSLCNSPLEFDEETLYYVKVYLVLGDIIFYDLKDPFDAAGYYQLALAAAVDLGNKKAQLKIYTRLATIYHNFLLDREKSLFFYQKARTFATELNVRRVNLPPLPLCGWAPWLAPSHPR</sequence>
<name>S3TC1_HUMAN</name>
<organism>
    <name type="scientific">Homo sapiens</name>
    <name type="common">Human</name>
    <dbReference type="NCBI Taxonomy" id="9606"/>
    <lineage>
        <taxon>Eukaryota</taxon>
        <taxon>Metazoa</taxon>
        <taxon>Chordata</taxon>
        <taxon>Craniata</taxon>
        <taxon>Vertebrata</taxon>
        <taxon>Euteleostomi</taxon>
        <taxon>Mammalia</taxon>
        <taxon>Eutheria</taxon>
        <taxon>Euarchontoglires</taxon>
        <taxon>Primates</taxon>
        <taxon>Haplorrhini</taxon>
        <taxon>Catarrhini</taxon>
        <taxon>Hominidae</taxon>
        <taxon>Homo</taxon>
    </lineage>
</organism>
<protein>
    <recommendedName>
        <fullName>SH3 domain and tetratricopeptide repeat-containing protein 1</fullName>
    </recommendedName>
</protein>